<gene>
    <name evidence="1" type="primary">rplW</name>
    <name type="ordered locus">YPN_3857</name>
    <name type="ORF">YP516_4380</name>
</gene>
<evidence type="ECO:0000255" key="1">
    <source>
        <dbReference type="HAMAP-Rule" id="MF_01369"/>
    </source>
</evidence>
<evidence type="ECO:0000305" key="2"/>
<feature type="chain" id="PRO_0000272883" description="Large ribosomal subunit protein uL23">
    <location>
        <begin position="1"/>
        <end position="100"/>
    </location>
</feature>
<reference key="1">
    <citation type="journal article" date="2006" name="J. Bacteriol.">
        <title>Complete genome sequence of Yersinia pestis strains Antiqua and Nepal516: evidence of gene reduction in an emerging pathogen.</title>
        <authorList>
            <person name="Chain P.S.G."/>
            <person name="Hu P."/>
            <person name="Malfatti S.A."/>
            <person name="Radnedge L."/>
            <person name="Larimer F."/>
            <person name="Vergez L.M."/>
            <person name="Worsham P."/>
            <person name="Chu M.C."/>
            <person name="Andersen G.L."/>
        </authorList>
    </citation>
    <scope>NUCLEOTIDE SEQUENCE [LARGE SCALE GENOMIC DNA]</scope>
    <source>
        <strain>Nepal516</strain>
    </source>
</reference>
<reference key="2">
    <citation type="submission" date="2009-04" db="EMBL/GenBank/DDBJ databases">
        <title>Yersinia pestis Nepal516A whole genome shotgun sequencing project.</title>
        <authorList>
            <person name="Plunkett G. III"/>
            <person name="Anderson B.D."/>
            <person name="Baumler D.J."/>
            <person name="Burland V."/>
            <person name="Cabot E.L."/>
            <person name="Glasner J.D."/>
            <person name="Mau B."/>
            <person name="Neeno-Eckwall E."/>
            <person name="Perna N.T."/>
            <person name="Munk A.C."/>
            <person name="Tapia R."/>
            <person name="Green L.D."/>
            <person name="Rogers Y.C."/>
            <person name="Detter J.C."/>
            <person name="Bruce D.C."/>
            <person name="Brettin T.S."/>
        </authorList>
    </citation>
    <scope>NUCLEOTIDE SEQUENCE [LARGE SCALE GENOMIC DNA]</scope>
    <source>
        <strain>Nepal516</strain>
    </source>
</reference>
<dbReference type="EMBL" id="CP000305">
    <property type="protein sequence ID" value="ABG20184.1"/>
    <property type="molecule type" value="Genomic_DNA"/>
</dbReference>
<dbReference type="EMBL" id="ACNQ01000019">
    <property type="protein sequence ID" value="EEO74772.1"/>
    <property type="molecule type" value="Genomic_DNA"/>
</dbReference>
<dbReference type="RefSeq" id="WP_002213423.1">
    <property type="nucleotide sequence ID" value="NZ_ACNQ01000019.1"/>
</dbReference>
<dbReference type="SMR" id="Q1CCU6"/>
<dbReference type="GeneID" id="96663194"/>
<dbReference type="KEGG" id="ypn:YPN_3857"/>
<dbReference type="HOGENOM" id="CLU_037562_3_1_6"/>
<dbReference type="Proteomes" id="UP000008936">
    <property type="component" value="Chromosome"/>
</dbReference>
<dbReference type="GO" id="GO:1990904">
    <property type="term" value="C:ribonucleoprotein complex"/>
    <property type="evidence" value="ECO:0007669"/>
    <property type="project" value="UniProtKB-KW"/>
</dbReference>
<dbReference type="GO" id="GO:0005840">
    <property type="term" value="C:ribosome"/>
    <property type="evidence" value="ECO:0007669"/>
    <property type="project" value="UniProtKB-KW"/>
</dbReference>
<dbReference type="GO" id="GO:0019843">
    <property type="term" value="F:rRNA binding"/>
    <property type="evidence" value="ECO:0007669"/>
    <property type="project" value="UniProtKB-UniRule"/>
</dbReference>
<dbReference type="GO" id="GO:0003735">
    <property type="term" value="F:structural constituent of ribosome"/>
    <property type="evidence" value="ECO:0007669"/>
    <property type="project" value="InterPro"/>
</dbReference>
<dbReference type="GO" id="GO:0006412">
    <property type="term" value="P:translation"/>
    <property type="evidence" value="ECO:0007669"/>
    <property type="project" value="UniProtKB-UniRule"/>
</dbReference>
<dbReference type="FunFam" id="3.30.70.330:FF:000001">
    <property type="entry name" value="50S ribosomal protein L23"/>
    <property type="match status" value="1"/>
</dbReference>
<dbReference type="Gene3D" id="3.30.70.330">
    <property type="match status" value="1"/>
</dbReference>
<dbReference type="HAMAP" id="MF_01369_B">
    <property type="entry name" value="Ribosomal_uL23_B"/>
    <property type="match status" value="1"/>
</dbReference>
<dbReference type="InterPro" id="IPR012677">
    <property type="entry name" value="Nucleotide-bd_a/b_plait_sf"/>
</dbReference>
<dbReference type="InterPro" id="IPR013025">
    <property type="entry name" value="Ribosomal_uL23-like"/>
</dbReference>
<dbReference type="InterPro" id="IPR012678">
    <property type="entry name" value="Ribosomal_uL23/eL15/eS24_sf"/>
</dbReference>
<dbReference type="InterPro" id="IPR001014">
    <property type="entry name" value="Ribosomal_uL23_CS"/>
</dbReference>
<dbReference type="NCBIfam" id="NF004358">
    <property type="entry name" value="PRK05738.1-1"/>
    <property type="match status" value="1"/>
</dbReference>
<dbReference type="NCBIfam" id="NF004359">
    <property type="entry name" value="PRK05738.1-3"/>
    <property type="match status" value="1"/>
</dbReference>
<dbReference type="NCBIfam" id="NF004363">
    <property type="entry name" value="PRK05738.2-4"/>
    <property type="match status" value="1"/>
</dbReference>
<dbReference type="NCBIfam" id="NF004366">
    <property type="entry name" value="PRK05738.3-2"/>
    <property type="match status" value="1"/>
</dbReference>
<dbReference type="PANTHER" id="PTHR11620">
    <property type="entry name" value="60S RIBOSOMAL PROTEIN L23A"/>
    <property type="match status" value="1"/>
</dbReference>
<dbReference type="Pfam" id="PF00276">
    <property type="entry name" value="Ribosomal_L23"/>
    <property type="match status" value="1"/>
</dbReference>
<dbReference type="SUPFAM" id="SSF54189">
    <property type="entry name" value="Ribosomal proteins S24e, L23 and L15e"/>
    <property type="match status" value="1"/>
</dbReference>
<dbReference type="PROSITE" id="PS00050">
    <property type="entry name" value="RIBOSOMAL_L23"/>
    <property type="match status" value="1"/>
</dbReference>
<sequence length="100" mass="11230">MIREERLLKVLRSPHVSEKASAAMEKNNTIVLKVAKDATKAEIKAAVQKLFEVEVEDVNTLLVKGKSKRHGQRVGRRSDWKKAYVTLKEGQNLDFIGGAE</sequence>
<accession>Q1CCU6</accession>
<accession>D1Q2L9</accession>
<name>RL23_YERPN</name>
<comment type="function">
    <text evidence="1">One of the early assembly proteins it binds 23S rRNA. One of the proteins that surrounds the polypeptide exit tunnel on the outside of the ribosome. Forms the main docking site for trigger factor binding to the ribosome.</text>
</comment>
<comment type="subunit">
    <text evidence="1">Part of the 50S ribosomal subunit. Contacts protein L29, and trigger factor when it is bound to the ribosome.</text>
</comment>
<comment type="similarity">
    <text evidence="1">Belongs to the universal ribosomal protein uL23 family.</text>
</comment>
<proteinExistence type="inferred from homology"/>
<organism>
    <name type="scientific">Yersinia pestis bv. Antiqua (strain Nepal516)</name>
    <dbReference type="NCBI Taxonomy" id="377628"/>
    <lineage>
        <taxon>Bacteria</taxon>
        <taxon>Pseudomonadati</taxon>
        <taxon>Pseudomonadota</taxon>
        <taxon>Gammaproteobacteria</taxon>
        <taxon>Enterobacterales</taxon>
        <taxon>Yersiniaceae</taxon>
        <taxon>Yersinia</taxon>
    </lineage>
</organism>
<protein>
    <recommendedName>
        <fullName evidence="1">Large ribosomal subunit protein uL23</fullName>
    </recommendedName>
    <alternativeName>
        <fullName evidence="2">50S ribosomal protein L23</fullName>
    </alternativeName>
</protein>
<keyword id="KW-0687">Ribonucleoprotein</keyword>
<keyword id="KW-0689">Ribosomal protein</keyword>
<keyword id="KW-0694">RNA-binding</keyword>
<keyword id="KW-0699">rRNA-binding</keyword>